<gene>
    <name type="primary">ZPLD1</name>
    <name type="ORF">QtsA-16765</name>
</gene>
<feature type="signal peptide" evidence="3">
    <location>
        <begin position="1"/>
        <end position="19"/>
    </location>
</feature>
<feature type="chain" id="PRO_0000307285" description="Zona pellucida-like domain-containing protein 1">
    <location>
        <begin position="20"/>
        <end position="415"/>
    </location>
</feature>
<feature type="chain" id="PRO_0000441815" description="Zona pellucida-like domain-containing protein 1, secreted form" evidence="6">
    <location>
        <begin position="20"/>
        <end position="319"/>
    </location>
</feature>
<feature type="topological domain" description="Extracellular" evidence="3">
    <location>
        <begin position="20"/>
        <end position="372"/>
    </location>
</feature>
<feature type="transmembrane region" description="Helical" evidence="3">
    <location>
        <begin position="373"/>
        <end position="393"/>
    </location>
</feature>
<feature type="topological domain" description="Cytoplasmic" evidence="3">
    <location>
        <begin position="394"/>
        <end position="415"/>
    </location>
</feature>
<feature type="domain" description="ZP" evidence="4">
    <location>
        <begin position="43"/>
        <end position="320"/>
    </location>
</feature>
<feature type="region of interest" description="Disordered" evidence="5">
    <location>
        <begin position="323"/>
        <end position="359"/>
    </location>
</feature>
<feature type="compositionally biased region" description="Low complexity" evidence="5">
    <location>
        <begin position="328"/>
        <end position="339"/>
    </location>
</feature>
<feature type="compositionally biased region" description="Polar residues" evidence="5">
    <location>
        <begin position="350"/>
        <end position="359"/>
    </location>
</feature>
<feature type="site" description="Cleavage" evidence="2">
    <location>
        <begin position="319"/>
        <end position="320"/>
    </location>
</feature>
<feature type="glycosylation site" description="N-linked (GlcNAc...) asparagine" evidence="3">
    <location>
        <position position="164"/>
    </location>
</feature>
<feature type="disulfide bond" evidence="2">
    <location>
        <begin position="44"/>
        <end position="155"/>
    </location>
</feature>
<feature type="disulfide bond" evidence="2">
    <location>
        <begin position="79"/>
        <end position="104"/>
    </location>
</feature>
<feature type="disulfide bond" evidence="2">
    <location>
        <begin position="235"/>
        <end position="296"/>
    </location>
</feature>
<feature type="disulfide bond" evidence="2">
    <location>
        <begin position="255"/>
        <end position="313"/>
    </location>
</feature>
<accession>Q95JJ6</accession>
<protein>
    <recommendedName>
        <fullName>Zona pellucida-like domain-containing protein 1</fullName>
        <shortName>ZP domain-containing protein 1</shortName>
    </recommendedName>
    <alternativeName>
        <fullName evidence="1">Cupulin</fullName>
    </alternativeName>
    <component>
        <recommendedName>
            <fullName evidence="1">Zona pellucida-like domain-containing protein 1, secreted form</fullName>
        </recommendedName>
    </component>
</protein>
<name>ZPLD1_MACFA</name>
<proteinExistence type="evidence at transcript level"/>
<keyword id="KW-0968">Cytoplasmic vesicle</keyword>
<keyword id="KW-1015">Disulfide bond</keyword>
<keyword id="KW-0272">Extracellular matrix</keyword>
<keyword id="KW-0325">Glycoprotein</keyword>
<keyword id="KW-0472">Membrane</keyword>
<keyword id="KW-1185">Reference proteome</keyword>
<keyword id="KW-0964">Secreted</keyword>
<keyword id="KW-0732">Signal</keyword>
<keyword id="KW-0812">Transmembrane</keyword>
<keyword id="KW-1133">Transmembrane helix</keyword>
<dbReference type="EMBL" id="AB070185">
    <property type="protein sequence ID" value="BAB63130.1"/>
    <property type="molecule type" value="mRNA"/>
</dbReference>
<dbReference type="RefSeq" id="NP_001270109.1">
    <property type="nucleotide sequence ID" value="NM_001283180.1"/>
</dbReference>
<dbReference type="SMR" id="Q95JJ6"/>
<dbReference type="STRING" id="9541.ENSMFAP00000002330"/>
<dbReference type="GlyCosmos" id="Q95JJ6">
    <property type="glycosylation" value="1 site, No reported glycans"/>
</dbReference>
<dbReference type="eggNOG" id="ENOG502QQQ1">
    <property type="taxonomic scope" value="Eukaryota"/>
</dbReference>
<dbReference type="Proteomes" id="UP000233100">
    <property type="component" value="Unplaced"/>
</dbReference>
<dbReference type="GO" id="GO:0030659">
    <property type="term" value="C:cytoplasmic vesicle membrane"/>
    <property type="evidence" value="ECO:0007669"/>
    <property type="project" value="UniProtKB-SubCell"/>
</dbReference>
<dbReference type="GO" id="GO:0005576">
    <property type="term" value="C:extracellular region"/>
    <property type="evidence" value="ECO:0007669"/>
    <property type="project" value="UniProtKB-KW"/>
</dbReference>
<dbReference type="Gene3D" id="2.60.40.4100">
    <property type="entry name" value="Zona pellucida, ZP-C domain"/>
    <property type="match status" value="1"/>
</dbReference>
<dbReference type="InterPro" id="IPR055355">
    <property type="entry name" value="ZP-C"/>
</dbReference>
<dbReference type="InterPro" id="IPR042235">
    <property type="entry name" value="ZP-C_dom"/>
</dbReference>
<dbReference type="InterPro" id="IPR055356">
    <property type="entry name" value="ZP-N"/>
</dbReference>
<dbReference type="InterPro" id="IPR001507">
    <property type="entry name" value="ZP_dom"/>
</dbReference>
<dbReference type="PANTHER" id="PTHR14002">
    <property type="entry name" value="ENDOGLIN/TGF-BETA RECEPTOR TYPE III"/>
    <property type="match status" value="1"/>
</dbReference>
<dbReference type="PANTHER" id="PTHR14002:SF24">
    <property type="entry name" value="ZONA PELLUCIDA-LIKE DOMAIN-CONTAINING PROTEIN 1"/>
    <property type="match status" value="1"/>
</dbReference>
<dbReference type="Pfam" id="PF00100">
    <property type="entry name" value="Zona_pellucida"/>
    <property type="match status" value="1"/>
</dbReference>
<dbReference type="Pfam" id="PF23344">
    <property type="entry name" value="ZP-N"/>
    <property type="match status" value="1"/>
</dbReference>
<dbReference type="SMART" id="SM00241">
    <property type="entry name" value="ZP"/>
    <property type="match status" value="1"/>
</dbReference>
<dbReference type="PROSITE" id="PS51034">
    <property type="entry name" value="ZP_2"/>
    <property type="match status" value="1"/>
</dbReference>
<evidence type="ECO:0000250" key="1">
    <source>
        <dbReference type="UniProtKB" id="C0H9B6"/>
    </source>
</evidence>
<evidence type="ECO:0000250" key="2">
    <source>
        <dbReference type="UniProtKB" id="P10761"/>
    </source>
</evidence>
<evidence type="ECO:0000255" key="3"/>
<evidence type="ECO:0000255" key="4">
    <source>
        <dbReference type="PROSITE-ProRule" id="PRU00375"/>
    </source>
</evidence>
<evidence type="ECO:0000256" key="5">
    <source>
        <dbReference type="SAM" id="MobiDB-lite"/>
    </source>
</evidence>
<evidence type="ECO:0000305" key="6"/>
<sequence>MEQIRLLLLLTIRVLSGSAQFNGYNCDANLHSRFPAERDISVYCGVQAITMKINFCTVLFSGYSETDLALNGRHGDSHCRGFINNNTFPAVVIFIINLSTLEGCGNNLVVSTIPGVSAYGNATSVQIGNISGYIDTPDPPTIISYLPGLLYKFSCSYPLEYLVNNTQLASSSAAISVRENNGTFVSTLNLLLYNDSTYNQQLIIPSIGLPLKTKVFAAVQATNLDGRWNVLMDYCYTTPSGNPNDDIRYDLFLSCDKDPQTTVIENGRSQRGRFSFEVFRFVKHKNQKMSTVFLHCVTKLCRADDCPFLMPICSHRERRDAGRRTTWSSQSSSGSAVLSAGPIITRSDETPTNNSQLGSPSVPPFQLNAITSALISGMVILGVMSFSLLVCPLALLHRKGPTSLVLNGIRNPVFD</sequence>
<comment type="function">
    <text evidence="1">Glycoprotein which is a component of the gelatinous extracellular matrix in the cupulae of the vestibular organ.</text>
</comment>
<comment type="subcellular location">
    <molecule>Zona pellucida-like domain-containing protein 1</molecule>
    <subcellularLocation>
        <location evidence="1">Cytoplasmic vesicle membrane</location>
        <topology evidence="3">Single-pass type I membrane protein</topology>
    </subcellularLocation>
</comment>
<comment type="subcellular location">
    <molecule>Zona pellucida-like domain-containing protein 1, secreted form</molecule>
    <subcellularLocation>
        <location evidence="1">Secreted</location>
        <location evidence="1">Extracellular space</location>
        <location evidence="1">Extracellular matrix</location>
    </subcellularLocation>
</comment>
<comment type="PTM">
    <text evidence="1">Proteolytically cleaved before the transmembrane segment to yield the secreted form found in the extracellular matrix of the cupula.</text>
</comment>
<reference key="1">
    <citation type="journal article" date="2002" name="BMC Genomics">
        <title>Cynomolgus monkey testicular cDNAs for discovery of novel human genes in the human genome sequence.</title>
        <authorList>
            <person name="Osada N."/>
            <person name="Hida M."/>
            <person name="Kusuda J."/>
            <person name="Tanuma R."/>
            <person name="Hirata M."/>
            <person name="Suto Y."/>
            <person name="Hirai M."/>
            <person name="Terao K."/>
            <person name="Sugano S."/>
            <person name="Hashimoto K."/>
        </authorList>
    </citation>
    <scope>NUCLEOTIDE SEQUENCE [LARGE SCALE MRNA]</scope>
    <source>
        <tissue>Testis</tissue>
    </source>
</reference>
<organism>
    <name type="scientific">Macaca fascicularis</name>
    <name type="common">Crab-eating macaque</name>
    <name type="synonym">Cynomolgus monkey</name>
    <dbReference type="NCBI Taxonomy" id="9541"/>
    <lineage>
        <taxon>Eukaryota</taxon>
        <taxon>Metazoa</taxon>
        <taxon>Chordata</taxon>
        <taxon>Craniata</taxon>
        <taxon>Vertebrata</taxon>
        <taxon>Euteleostomi</taxon>
        <taxon>Mammalia</taxon>
        <taxon>Eutheria</taxon>
        <taxon>Euarchontoglires</taxon>
        <taxon>Primates</taxon>
        <taxon>Haplorrhini</taxon>
        <taxon>Catarrhini</taxon>
        <taxon>Cercopithecidae</taxon>
        <taxon>Cercopithecinae</taxon>
        <taxon>Macaca</taxon>
    </lineage>
</organism>